<feature type="chain" id="PRO_1000122664" description="ATP phosphoribosyltransferase regulatory subunit">
    <location>
        <begin position="1"/>
        <end position="376"/>
    </location>
</feature>
<name>HISZ_BRUMB</name>
<keyword id="KW-0028">Amino-acid biosynthesis</keyword>
<keyword id="KW-0963">Cytoplasm</keyword>
<keyword id="KW-0368">Histidine biosynthesis</keyword>
<dbReference type="EMBL" id="CP001489">
    <property type="protein sequence ID" value="ACO02061.1"/>
    <property type="molecule type" value="Genomic_DNA"/>
</dbReference>
<dbReference type="RefSeq" id="WP_005971898.1">
    <property type="nucleotide sequence ID" value="NC_012442.1"/>
</dbReference>
<dbReference type="SMR" id="C0RKC8"/>
<dbReference type="KEGG" id="bmi:BMEA_B0188"/>
<dbReference type="HOGENOM" id="CLU_025113_6_0_5"/>
<dbReference type="UniPathway" id="UPA00031">
    <property type="reaction ID" value="UER00006"/>
</dbReference>
<dbReference type="Proteomes" id="UP000001748">
    <property type="component" value="Chromosome II"/>
</dbReference>
<dbReference type="GO" id="GO:0005737">
    <property type="term" value="C:cytoplasm"/>
    <property type="evidence" value="ECO:0007669"/>
    <property type="project" value="UniProtKB-SubCell"/>
</dbReference>
<dbReference type="GO" id="GO:0004821">
    <property type="term" value="F:histidine-tRNA ligase activity"/>
    <property type="evidence" value="ECO:0007669"/>
    <property type="project" value="TreeGrafter"/>
</dbReference>
<dbReference type="GO" id="GO:0006427">
    <property type="term" value="P:histidyl-tRNA aminoacylation"/>
    <property type="evidence" value="ECO:0007669"/>
    <property type="project" value="TreeGrafter"/>
</dbReference>
<dbReference type="GO" id="GO:0000105">
    <property type="term" value="P:L-histidine biosynthetic process"/>
    <property type="evidence" value="ECO:0007669"/>
    <property type="project" value="UniProtKB-UniRule"/>
</dbReference>
<dbReference type="Gene3D" id="3.30.930.10">
    <property type="entry name" value="Bira Bifunctional Protein, Domain 2"/>
    <property type="match status" value="1"/>
</dbReference>
<dbReference type="HAMAP" id="MF_00125">
    <property type="entry name" value="HisZ"/>
    <property type="match status" value="1"/>
</dbReference>
<dbReference type="InterPro" id="IPR045864">
    <property type="entry name" value="aa-tRNA-synth_II/BPL/LPL"/>
</dbReference>
<dbReference type="InterPro" id="IPR041715">
    <property type="entry name" value="HisRS-like_core"/>
</dbReference>
<dbReference type="InterPro" id="IPR004516">
    <property type="entry name" value="HisRS/HisZ"/>
</dbReference>
<dbReference type="InterPro" id="IPR004517">
    <property type="entry name" value="HisZ"/>
</dbReference>
<dbReference type="NCBIfam" id="NF008948">
    <property type="entry name" value="PRK12295.1-1"/>
    <property type="match status" value="1"/>
</dbReference>
<dbReference type="NCBIfam" id="NF008951">
    <property type="entry name" value="PRK12295.1-4"/>
    <property type="match status" value="1"/>
</dbReference>
<dbReference type="PANTHER" id="PTHR43707:SF1">
    <property type="entry name" value="HISTIDINE--TRNA LIGASE, MITOCHONDRIAL-RELATED"/>
    <property type="match status" value="1"/>
</dbReference>
<dbReference type="PANTHER" id="PTHR43707">
    <property type="entry name" value="HISTIDYL-TRNA SYNTHETASE"/>
    <property type="match status" value="1"/>
</dbReference>
<dbReference type="Pfam" id="PF13393">
    <property type="entry name" value="tRNA-synt_His"/>
    <property type="match status" value="2"/>
</dbReference>
<dbReference type="PIRSF" id="PIRSF001549">
    <property type="entry name" value="His-tRNA_synth"/>
    <property type="match status" value="1"/>
</dbReference>
<dbReference type="SUPFAM" id="SSF55681">
    <property type="entry name" value="Class II aaRS and biotin synthetases"/>
    <property type="match status" value="1"/>
</dbReference>
<gene>
    <name evidence="1" type="primary">hisZ</name>
    <name type="ordered locus">BMEA_B0188</name>
</gene>
<sequence>MVGSRTSPIFNALRVELNAREAELVEIPLIQPADPFLDMAGEDLRRRIFLTENENGDSLCLRPEFTIPVCRNHIALNAATPKRYAYLGEVFRQRRDGAAEFLQAGIEDLGAADEAASDARSLADALSCVKAIAPDAPLEIVLGDQSVFAGMLKALGLPQGWRKKLLRSFGDAHSMDLALAELTGTQRRDPLPESLAVLVAEGDEIGLARMLEAEMLEAGISPGAGRTPVEIARRLIEKEDLAATHFPAAALDLLRQFLAIRVSLDTAAVTLRAFAADNALDLGAVLQKFEARADAIAQAGIEMKDIIYDASFGRPLDYYTGLVYEIRDASNRQDGVLAGGGRYDRLLTMLGACEAIPGVGFSIWLDRLQALAGEKQ</sequence>
<protein>
    <recommendedName>
        <fullName evidence="1">ATP phosphoribosyltransferase regulatory subunit</fullName>
    </recommendedName>
</protein>
<proteinExistence type="inferred from homology"/>
<comment type="function">
    <text evidence="1">Required for the first step of histidine biosynthesis. May allow the feedback regulation of ATP phosphoribosyltransferase activity by histidine.</text>
</comment>
<comment type="pathway">
    <text evidence="1">Amino-acid biosynthesis; L-histidine biosynthesis; L-histidine from 5-phospho-alpha-D-ribose 1-diphosphate: step 1/9.</text>
</comment>
<comment type="subunit">
    <text evidence="1">Heteromultimer composed of HisG and HisZ subunits.</text>
</comment>
<comment type="subcellular location">
    <subcellularLocation>
        <location evidence="1">Cytoplasm</location>
    </subcellularLocation>
</comment>
<comment type="miscellaneous">
    <text>This function is generally fulfilled by the C-terminal part of HisG, which is missing in some bacteria such as this one.</text>
</comment>
<comment type="similarity">
    <text evidence="1">Belongs to the class-II aminoacyl-tRNA synthetase family. HisZ subfamily.</text>
</comment>
<reference key="1">
    <citation type="submission" date="2009-03" db="EMBL/GenBank/DDBJ databases">
        <title>Brucella melitensis ATCC 23457 whole genome shotgun sequencing project.</title>
        <authorList>
            <person name="Setubal J.C."/>
            <person name="Boyle S."/>
            <person name="Crasta O.R."/>
            <person name="Gillespie J.J."/>
            <person name="Kenyon R.W."/>
            <person name="Lu J."/>
            <person name="Mane S."/>
            <person name="Nagrani S."/>
            <person name="Shallom J.M."/>
            <person name="Shallom S."/>
            <person name="Shukla M."/>
            <person name="Snyder E.E."/>
            <person name="Sobral B.W."/>
            <person name="Wattam A.R."/>
            <person name="Will R."/>
            <person name="Williams K."/>
            <person name="Yoo H."/>
            <person name="Munk C."/>
            <person name="Tapia R."/>
            <person name="Han C."/>
            <person name="Detter J.C."/>
            <person name="Bruce D."/>
            <person name="Brettin T.S."/>
        </authorList>
    </citation>
    <scope>NUCLEOTIDE SEQUENCE [LARGE SCALE GENOMIC DNA]</scope>
    <source>
        <strain>ATCC 23457</strain>
    </source>
</reference>
<evidence type="ECO:0000255" key="1">
    <source>
        <dbReference type="HAMAP-Rule" id="MF_00125"/>
    </source>
</evidence>
<organism>
    <name type="scientific">Brucella melitensis biotype 2 (strain ATCC 23457)</name>
    <dbReference type="NCBI Taxonomy" id="546272"/>
    <lineage>
        <taxon>Bacteria</taxon>
        <taxon>Pseudomonadati</taxon>
        <taxon>Pseudomonadota</taxon>
        <taxon>Alphaproteobacteria</taxon>
        <taxon>Hyphomicrobiales</taxon>
        <taxon>Brucellaceae</taxon>
        <taxon>Brucella/Ochrobactrum group</taxon>
        <taxon>Brucella</taxon>
    </lineage>
</organism>
<accession>C0RKC8</accession>